<evidence type="ECO:0000305" key="1"/>
<feature type="chain" id="PRO_0000298657" description="Uncharacterized protein SE_1604">
    <location>
        <begin position="1"/>
        <end position="342"/>
    </location>
</feature>
<dbReference type="EMBL" id="AE015929">
    <property type="protein sequence ID" value="AAO05203.1"/>
    <property type="molecule type" value="Genomic_DNA"/>
</dbReference>
<dbReference type="RefSeq" id="NP_765159.1">
    <property type="nucleotide sequence ID" value="NC_004461.1"/>
</dbReference>
<dbReference type="RefSeq" id="WP_002468109.1">
    <property type="nucleotide sequence ID" value="NZ_WBME01000010.1"/>
</dbReference>
<dbReference type="SMR" id="Q8CRT1"/>
<dbReference type="KEGG" id="sep:SE_1604"/>
<dbReference type="PATRIC" id="fig|176280.10.peg.1569"/>
<dbReference type="eggNOG" id="COG2706">
    <property type="taxonomic scope" value="Bacteria"/>
</dbReference>
<dbReference type="HOGENOM" id="CLU_038716_3_0_9"/>
<dbReference type="OrthoDB" id="9790815at2"/>
<dbReference type="Proteomes" id="UP000001411">
    <property type="component" value="Chromosome"/>
</dbReference>
<dbReference type="GO" id="GO:0005829">
    <property type="term" value="C:cytosol"/>
    <property type="evidence" value="ECO:0007669"/>
    <property type="project" value="TreeGrafter"/>
</dbReference>
<dbReference type="GO" id="GO:0017057">
    <property type="term" value="F:6-phosphogluconolactonase activity"/>
    <property type="evidence" value="ECO:0007669"/>
    <property type="project" value="TreeGrafter"/>
</dbReference>
<dbReference type="Gene3D" id="2.130.10.10">
    <property type="entry name" value="YVTN repeat-like/Quinoprotein amine dehydrogenase"/>
    <property type="match status" value="1"/>
</dbReference>
<dbReference type="InterPro" id="IPR050282">
    <property type="entry name" value="Cycloisomerase_2"/>
</dbReference>
<dbReference type="InterPro" id="IPR011048">
    <property type="entry name" value="Haem_d1_sf"/>
</dbReference>
<dbReference type="InterPro" id="IPR019405">
    <property type="entry name" value="Lactonase_7-beta_prop"/>
</dbReference>
<dbReference type="InterPro" id="IPR015943">
    <property type="entry name" value="WD40/YVTN_repeat-like_dom_sf"/>
</dbReference>
<dbReference type="PANTHER" id="PTHR30344:SF1">
    <property type="entry name" value="6-PHOSPHOGLUCONOLACTONASE"/>
    <property type="match status" value="1"/>
</dbReference>
<dbReference type="PANTHER" id="PTHR30344">
    <property type="entry name" value="6-PHOSPHOGLUCONOLACTONASE-RELATED"/>
    <property type="match status" value="1"/>
</dbReference>
<dbReference type="Pfam" id="PF10282">
    <property type="entry name" value="Lactonase"/>
    <property type="match status" value="1"/>
</dbReference>
<dbReference type="SUPFAM" id="SSF51004">
    <property type="entry name" value="C-terminal (heme d1) domain of cytochrome cd1-nitrite reductase"/>
    <property type="match status" value="1"/>
</dbReference>
<comment type="similarity">
    <text evidence="1">Belongs to the cycloisomerase 2 family.</text>
</comment>
<organism>
    <name type="scientific">Staphylococcus epidermidis (strain ATCC 12228 / FDA PCI 1200)</name>
    <dbReference type="NCBI Taxonomy" id="176280"/>
    <lineage>
        <taxon>Bacteria</taxon>
        <taxon>Bacillati</taxon>
        <taxon>Bacillota</taxon>
        <taxon>Bacilli</taxon>
        <taxon>Bacillales</taxon>
        <taxon>Staphylococcaceae</taxon>
        <taxon>Staphylococcus</taxon>
    </lineage>
</organism>
<name>Y1604_STAES</name>
<accession>Q8CRT1</accession>
<reference key="1">
    <citation type="journal article" date="2003" name="Mol. Microbiol.">
        <title>Genome-based analysis of virulence genes in a non-biofilm-forming Staphylococcus epidermidis strain (ATCC 12228).</title>
        <authorList>
            <person name="Zhang Y.-Q."/>
            <person name="Ren S.-X."/>
            <person name="Li H.-L."/>
            <person name="Wang Y.-X."/>
            <person name="Fu G."/>
            <person name="Yang J."/>
            <person name="Qin Z.-Q."/>
            <person name="Miao Y.-G."/>
            <person name="Wang W.-Y."/>
            <person name="Chen R.-S."/>
            <person name="Shen Y."/>
            <person name="Chen Z."/>
            <person name="Yuan Z.-H."/>
            <person name="Zhao G.-P."/>
            <person name="Qu D."/>
            <person name="Danchin A."/>
            <person name="Wen Y.-M."/>
        </authorList>
    </citation>
    <scope>NUCLEOTIDE SEQUENCE [LARGE SCALE GENOMIC DNA]</scope>
    <source>
        <strain>ATCC 12228 / FDA PCI 1200</strain>
    </source>
</reference>
<gene>
    <name type="ordered locus">SE_1604</name>
</gene>
<proteinExistence type="inferred from homology"/>
<protein>
    <recommendedName>
        <fullName>Uncharacterized protein SE_1604</fullName>
    </recommendedName>
</protein>
<sequence>MTLGYIGSYTKKSGKGIYRFKLNDETGVIEALETGYEIEASTYLTRNESFLYAITKEGEECGVASFSIKEDGQLELINKCLESKQGTGCYIQVSSNGKYLFEAVYGAGLARIYKLNQITGAIEKLIEELAHEFPTGSHERQDSSHVHFLNETPDHKYVVATDLGTDRVVTYKFGEDGLKQYAVSQFKNSDGPRHIAFSNDGRHAYIVHELSNEVSVTEYQDGKFIELERHSTIPSDFNGESKLAAVRLSHDGKHLYISNRGHDSIAIFEVLEDGRSLRSIEIQPSYDAFPRDFNITESDNYLICAHQEGESKVSIFERDNITGKLSLKDKKAIANEGVCVLL</sequence>